<protein>
    <recommendedName>
        <fullName>Metal transporter Nramp4</fullName>
    </recommendedName>
</protein>
<feature type="chain" id="PRO_0000405569" description="Metal transporter Nramp4">
    <location>
        <begin position="1"/>
        <end position="550"/>
    </location>
</feature>
<feature type="transmembrane region" description="Helical" evidence="2">
    <location>
        <begin position="72"/>
        <end position="92"/>
    </location>
</feature>
<feature type="transmembrane region" description="Helical" evidence="2">
    <location>
        <begin position="105"/>
        <end position="125"/>
    </location>
</feature>
<feature type="transmembrane region" description="Helical" evidence="2">
    <location>
        <begin position="151"/>
        <end position="171"/>
    </location>
</feature>
<feature type="transmembrane region" description="Helical" evidence="2">
    <location>
        <begin position="177"/>
        <end position="197"/>
    </location>
</feature>
<feature type="transmembrane region" description="Helical" evidence="2">
    <location>
        <begin position="207"/>
        <end position="227"/>
    </location>
</feature>
<feature type="transmembrane region" description="Helical" evidence="2">
    <location>
        <begin position="255"/>
        <end position="275"/>
    </location>
</feature>
<feature type="transmembrane region" description="Helical" evidence="2">
    <location>
        <begin position="292"/>
        <end position="312"/>
    </location>
</feature>
<feature type="transmembrane region" description="Helical" evidence="2">
    <location>
        <begin position="354"/>
        <end position="374"/>
    </location>
</feature>
<feature type="transmembrane region" description="Helical" evidence="2">
    <location>
        <begin position="388"/>
        <end position="408"/>
    </location>
</feature>
<feature type="transmembrane region" description="Helical" evidence="2">
    <location>
        <begin position="416"/>
        <end position="436"/>
    </location>
</feature>
<feature type="transmembrane region" description="Helical" evidence="2">
    <location>
        <begin position="457"/>
        <end position="477"/>
    </location>
</feature>
<feature type="transmembrane region" description="Helical" evidence="2">
    <location>
        <begin position="492"/>
        <end position="512"/>
    </location>
</feature>
<feature type="region of interest" description="Disordered" evidence="3">
    <location>
        <begin position="1"/>
        <end position="37"/>
    </location>
</feature>
<feature type="compositionally biased region" description="Basic and acidic residues" evidence="3">
    <location>
        <begin position="1"/>
        <end position="13"/>
    </location>
</feature>
<feature type="compositionally biased region" description="Low complexity" evidence="3">
    <location>
        <begin position="14"/>
        <end position="29"/>
    </location>
</feature>
<feature type="splice variant" id="VSP_040695" description="In isoform 3." evidence="4">
    <location>
        <begin position="1"/>
        <end position="139"/>
    </location>
</feature>
<feature type="splice variant" id="VSP_040696" description="In isoform 4." evidence="4">
    <original>ARKMEFT</original>
    <variation>VRIFLCL</variation>
    <location>
        <begin position="204"/>
        <end position="210"/>
    </location>
</feature>
<feature type="splice variant" id="VSP_040697" description="In isoform 4." evidence="4">
    <location>
        <begin position="211"/>
        <end position="550"/>
    </location>
</feature>
<feature type="splice variant" id="VSP_040698" description="In isoform 2 and isoform 3." evidence="4">
    <original>GFSGMRKCIIY</original>
    <variation>VHLPNYWSRLD</variation>
    <location>
        <begin position="380"/>
        <end position="390"/>
    </location>
</feature>
<feature type="splice variant" id="VSP_040699" description="In isoform 2 and isoform 3." evidence="4">
    <location>
        <begin position="391"/>
        <end position="550"/>
    </location>
</feature>
<comment type="function">
    <text evidence="1">Probable metal transporter.</text>
</comment>
<comment type="subcellular location">
    <subcellularLocation>
        <location evidence="5">Membrane</location>
        <topology evidence="5">Multi-pass membrane protein</topology>
    </subcellularLocation>
</comment>
<comment type="alternative products">
    <event type="alternative splicing"/>
    <isoform>
        <id>Q5QN13-1</id>
        <name>1</name>
        <sequence type="displayed"/>
    </isoform>
    <isoform>
        <id>Q5QN13-2</id>
        <name>2</name>
        <sequence type="described" ref="VSP_040698 VSP_040699"/>
    </isoform>
    <isoform>
        <id>Q5QN13-3</id>
        <name>3</name>
        <sequence type="described" ref="VSP_040695 VSP_040698 VSP_040699"/>
    </isoform>
    <isoform>
        <id>Q5QN13-4</id>
        <name>4</name>
        <sequence type="described" ref="VSP_040696 VSP_040697"/>
    </isoform>
</comment>
<comment type="similarity">
    <text evidence="5">Belongs to the NRAMP (TC 2.A.55) family.</text>
</comment>
<comment type="sequence caution" evidence="5">
    <conflict type="erroneous initiation">
        <sequence resource="EMBL-CDS" id="BAG91007"/>
    </conflict>
    <text>Truncated N-terminus.</text>
</comment>
<proteinExistence type="evidence at transcript level"/>
<reference key="1">
    <citation type="journal article" date="2002" name="Nature">
        <title>The genome sequence and structure of rice chromosome 1.</title>
        <authorList>
            <person name="Sasaki T."/>
            <person name="Matsumoto T."/>
            <person name="Yamamoto K."/>
            <person name="Sakata K."/>
            <person name="Baba T."/>
            <person name="Katayose Y."/>
            <person name="Wu J."/>
            <person name="Niimura Y."/>
            <person name="Cheng Z."/>
            <person name="Nagamura Y."/>
            <person name="Antonio B.A."/>
            <person name="Kanamori H."/>
            <person name="Hosokawa S."/>
            <person name="Masukawa M."/>
            <person name="Arikawa K."/>
            <person name="Chiden Y."/>
            <person name="Hayashi M."/>
            <person name="Okamoto M."/>
            <person name="Ando T."/>
            <person name="Aoki H."/>
            <person name="Arita K."/>
            <person name="Hamada M."/>
            <person name="Harada C."/>
            <person name="Hijishita S."/>
            <person name="Honda M."/>
            <person name="Ichikawa Y."/>
            <person name="Idonuma A."/>
            <person name="Iijima M."/>
            <person name="Ikeda M."/>
            <person name="Ikeno M."/>
            <person name="Ito S."/>
            <person name="Ito T."/>
            <person name="Ito Y."/>
            <person name="Ito Y."/>
            <person name="Iwabuchi A."/>
            <person name="Kamiya K."/>
            <person name="Karasawa W."/>
            <person name="Katagiri S."/>
            <person name="Kikuta A."/>
            <person name="Kobayashi N."/>
            <person name="Kono I."/>
            <person name="Machita K."/>
            <person name="Maehara T."/>
            <person name="Mizuno H."/>
            <person name="Mizubayashi T."/>
            <person name="Mukai Y."/>
            <person name="Nagasaki H."/>
            <person name="Nakashima M."/>
            <person name="Nakama Y."/>
            <person name="Nakamichi Y."/>
            <person name="Nakamura M."/>
            <person name="Namiki N."/>
            <person name="Negishi M."/>
            <person name="Ohta I."/>
            <person name="Ono N."/>
            <person name="Saji S."/>
            <person name="Sakai K."/>
            <person name="Shibata M."/>
            <person name="Shimokawa T."/>
            <person name="Shomura A."/>
            <person name="Song J."/>
            <person name="Takazaki Y."/>
            <person name="Terasawa K."/>
            <person name="Tsuji K."/>
            <person name="Waki K."/>
            <person name="Yamagata H."/>
            <person name="Yamane H."/>
            <person name="Yoshiki S."/>
            <person name="Yoshihara R."/>
            <person name="Yukawa K."/>
            <person name="Zhong H."/>
            <person name="Iwama H."/>
            <person name="Endo T."/>
            <person name="Ito H."/>
            <person name="Hahn J.H."/>
            <person name="Kim H.-I."/>
            <person name="Eun M.-Y."/>
            <person name="Yano M."/>
            <person name="Jiang J."/>
            <person name="Gojobori T."/>
        </authorList>
    </citation>
    <scope>NUCLEOTIDE SEQUENCE [LARGE SCALE GENOMIC DNA]</scope>
    <source>
        <strain>cv. Nipponbare</strain>
    </source>
</reference>
<reference key="2">
    <citation type="journal article" date="2005" name="Nature">
        <title>The map-based sequence of the rice genome.</title>
        <authorList>
            <consortium name="International rice genome sequencing project (IRGSP)"/>
        </authorList>
    </citation>
    <scope>NUCLEOTIDE SEQUENCE [LARGE SCALE GENOMIC DNA]</scope>
    <source>
        <strain>cv. Nipponbare</strain>
    </source>
</reference>
<reference key="3">
    <citation type="journal article" date="2008" name="Nucleic Acids Res.">
        <title>The rice annotation project database (RAP-DB): 2008 update.</title>
        <authorList>
            <consortium name="The rice annotation project (RAP)"/>
        </authorList>
    </citation>
    <scope>GENOME REANNOTATION</scope>
    <source>
        <strain>cv. Nipponbare</strain>
    </source>
</reference>
<reference key="4">
    <citation type="journal article" date="2013" name="Rice">
        <title>Improvement of the Oryza sativa Nipponbare reference genome using next generation sequence and optical map data.</title>
        <authorList>
            <person name="Kawahara Y."/>
            <person name="de la Bastide M."/>
            <person name="Hamilton J.P."/>
            <person name="Kanamori H."/>
            <person name="McCombie W.R."/>
            <person name="Ouyang S."/>
            <person name="Schwartz D.C."/>
            <person name="Tanaka T."/>
            <person name="Wu J."/>
            <person name="Zhou S."/>
            <person name="Childs K.L."/>
            <person name="Davidson R.M."/>
            <person name="Lin H."/>
            <person name="Quesada-Ocampo L."/>
            <person name="Vaillancourt B."/>
            <person name="Sakai H."/>
            <person name="Lee S.S."/>
            <person name="Kim J."/>
            <person name="Numa H."/>
            <person name="Itoh T."/>
            <person name="Buell C.R."/>
            <person name="Matsumoto T."/>
        </authorList>
    </citation>
    <scope>GENOME REANNOTATION</scope>
    <source>
        <strain>cv. Nipponbare</strain>
    </source>
</reference>
<reference key="5">
    <citation type="journal article" date="2005" name="PLoS Biol.">
        <title>The genomes of Oryza sativa: a history of duplications.</title>
        <authorList>
            <person name="Yu J."/>
            <person name="Wang J."/>
            <person name="Lin W."/>
            <person name="Li S."/>
            <person name="Li H."/>
            <person name="Zhou J."/>
            <person name="Ni P."/>
            <person name="Dong W."/>
            <person name="Hu S."/>
            <person name="Zeng C."/>
            <person name="Zhang J."/>
            <person name="Zhang Y."/>
            <person name="Li R."/>
            <person name="Xu Z."/>
            <person name="Li S."/>
            <person name="Li X."/>
            <person name="Zheng H."/>
            <person name="Cong L."/>
            <person name="Lin L."/>
            <person name="Yin J."/>
            <person name="Geng J."/>
            <person name="Li G."/>
            <person name="Shi J."/>
            <person name="Liu J."/>
            <person name="Lv H."/>
            <person name="Li J."/>
            <person name="Wang J."/>
            <person name="Deng Y."/>
            <person name="Ran L."/>
            <person name="Shi X."/>
            <person name="Wang X."/>
            <person name="Wu Q."/>
            <person name="Li C."/>
            <person name="Ren X."/>
            <person name="Wang J."/>
            <person name="Wang X."/>
            <person name="Li D."/>
            <person name="Liu D."/>
            <person name="Zhang X."/>
            <person name="Ji Z."/>
            <person name="Zhao W."/>
            <person name="Sun Y."/>
            <person name="Zhang Z."/>
            <person name="Bao J."/>
            <person name="Han Y."/>
            <person name="Dong L."/>
            <person name="Ji J."/>
            <person name="Chen P."/>
            <person name="Wu S."/>
            <person name="Liu J."/>
            <person name="Xiao Y."/>
            <person name="Bu D."/>
            <person name="Tan J."/>
            <person name="Yang L."/>
            <person name="Ye C."/>
            <person name="Zhang J."/>
            <person name="Xu J."/>
            <person name="Zhou Y."/>
            <person name="Yu Y."/>
            <person name="Zhang B."/>
            <person name="Zhuang S."/>
            <person name="Wei H."/>
            <person name="Liu B."/>
            <person name="Lei M."/>
            <person name="Yu H."/>
            <person name="Li Y."/>
            <person name="Xu H."/>
            <person name="Wei S."/>
            <person name="He X."/>
            <person name="Fang L."/>
            <person name="Zhang Z."/>
            <person name="Zhang Y."/>
            <person name="Huang X."/>
            <person name="Su Z."/>
            <person name="Tong W."/>
            <person name="Li J."/>
            <person name="Tong Z."/>
            <person name="Li S."/>
            <person name="Ye J."/>
            <person name="Wang L."/>
            <person name="Fang L."/>
            <person name="Lei T."/>
            <person name="Chen C.-S."/>
            <person name="Chen H.-C."/>
            <person name="Xu Z."/>
            <person name="Li H."/>
            <person name="Huang H."/>
            <person name="Zhang F."/>
            <person name="Xu H."/>
            <person name="Li N."/>
            <person name="Zhao C."/>
            <person name="Li S."/>
            <person name="Dong L."/>
            <person name="Huang Y."/>
            <person name="Li L."/>
            <person name="Xi Y."/>
            <person name="Qi Q."/>
            <person name="Li W."/>
            <person name="Zhang B."/>
            <person name="Hu W."/>
            <person name="Zhang Y."/>
            <person name="Tian X."/>
            <person name="Jiao Y."/>
            <person name="Liang X."/>
            <person name="Jin J."/>
            <person name="Gao L."/>
            <person name="Zheng W."/>
            <person name="Hao B."/>
            <person name="Liu S.-M."/>
            <person name="Wang W."/>
            <person name="Yuan L."/>
            <person name="Cao M."/>
            <person name="McDermott J."/>
            <person name="Samudrala R."/>
            <person name="Wang J."/>
            <person name="Wong G.K.-S."/>
            <person name="Yang H."/>
        </authorList>
    </citation>
    <scope>NUCLEOTIDE SEQUENCE [LARGE SCALE GENOMIC DNA]</scope>
    <source>
        <strain>cv. Nipponbare</strain>
    </source>
</reference>
<reference key="6">
    <citation type="journal article" date="2003" name="Science">
        <title>Collection, mapping, and annotation of over 28,000 cDNA clones from japonica rice.</title>
        <authorList>
            <consortium name="The rice full-length cDNA consortium"/>
        </authorList>
    </citation>
    <scope>NUCLEOTIDE SEQUENCE [LARGE SCALE MRNA] (ISOFORMS 1; 2; 3 AND 4)</scope>
    <source>
        <strain>cv. Nipponbare</strain>
    </source>
</reference>
<organism>
    <name type="scientific">Oryza sativa subsp. japonica</name>
    <name type="common">Rice</name>
    <dbReference type="NCBI Taxonomy" id="39947"/>
    <lineage>
        <taxon>Eukaryota</taxon>
        <taxon>Viridiplantae</taxon>
        <taxon>Streptophyta</taxon>
        <taxon>Embryophyta</taxon>
        <taxon>Tracheophyta</taxon>
        <taxon>Spermatophyta</taxon>
        <taxon>Magnoliopsida</taxon>
        <taxon>Liliopsida</taxon>
        <taxon>Poales</taxon>
        <taxon>Poaceae</taxon>
        <taxon>BOP clade</taxon>
        <taxon>Oryzoideae</taxon>
        <taxon>Oryzeae</taxon>
        <taxon>Oryzinae</taxon>
        <taxon>Oryza</taxon>
        <taxon>Oryza sativa</taxon>
    </lineage>
</organism>
<accession>Q5QN13</accession>
<accession>A0A0P0V3B2</accession>
<accession>B7EF59</accession>
<accession>B7EKG9</accession>
<accession>Q5QN12</accession>
<dbReference type="EMBL" id="AP003144">
    <property type="protein sequence ID" value="BAD73194.1"/>
    <property type="molecule type" value="Genomic_DNA"/>
</dbReference>
<dbReference type="EMBL" id="AP003144">
    <property type="protein sequence ID" value="BAD73195.1"/>
    <property type="molecule type" value="Genomic_DNA"/>
</dbReference>
<dbReference type="EMBL" id="AP008207">
    <property type="protein sequence ID" value="BAF05053.1"/>
    <property type="molecule type" value="Genomic_DNA"/>
</dbReference>
<dbReference type="EMBL" id="AP014957">
    <property type="protein sequence ID" value="BAS72334.1"/>
    <property type="molecule type" value="Genomic_DNA"/>
</dbReference>
<dbReference type="EMBL" id="AP014957">
    <property type="protein sequence ID" value="BAS72335.1"/>
    <property type="molecule type" value="Genomic_DNA"/>
</dbReference>
<dbReference type="EMBL" id="AP014957">
    <property type="protein sequence ID" value="BAS72336.1"/>
    <property type="molecule type" value="Genomic_DNA"/>
</dbReference>
<dbReference type="EMBL" id="CM000138">
    <property type="protein sequence ID" value="EEE54653.1"/>
    <property type="molecule type" value="Genomic_DNA"/>
</dbReference>
<dbReference type="EMBL" id="AK068118">
    <property type="protein sequence ID" value="BAG90764.1"/>
    <property type="molecule type" value="mRNA"/>
</dbReference>
<dbReference type="EMBL" id="AK068641">
    <property type="protein sequence ID" value="BAG91006.1"/>
    <property type="molecule type" value="mRNA"/>
</dbReference>
<dbReference type="EMBL" id="AK068641">
    <property type="protein sequence ID" value="BAG91007.1"/>
    <property type="status" value="ALT_INIT"/>
    <property type="molecule type" value="mRNA"/>
</dbReference>
<dbReference type="EMBL" id="AK072201">
    <property type="protein sequence ID" value="BAG92866.1"/>
    <property type="molecule type" value="mRNA"/>
</dbReference>
<dbReference type="EMBL" id="AK122122">
    <property type="protein sequence ID" value="BAH00803.1"/>
    <property type="molecule type" value="mRNA"/>
</dbReference>
<dbReference type="RefSeq" id="XP_015620405.1">
    <property type="nucleotide sequence ID" value="XM_015764919.1"/>
</dbReference>
<dbReference type="RefSeq" id="XP_015620414.1">
    <property type="nucleotide sequence ID" value="XM_015764928.1"/>
</dbReference>
<dbReference type="SMR" id="Q5QN13"/>
<dbReference type="FunCoup" id="Q5QN13">
    <property type="interactions" value="6"/>
</dbReference>
<dbReference type="STRING" id="39947.Q5QN13"/>
<dbReference type="PaxDb" id="39947-Q5QN13"/>
<dbReference type="EnsemblPlants" id="Os01t0503400-03">
    <molecule id="Q5QN13-1"/>
    <property type="protein sequence ID" value="Os01t0503400-03"/>
    <property type="gene ID" value="Os01g0503400"/>
</dbReference>
<dbReference type="Gramene" id="Os01t0503400-03">
    <molecule id="Q5QN13-1"/>
    <property type="protein sequence ID" value="Os01t0503400-03"/>
    <property type="gene ID" value="Os01g0503400"/>
</dbReference>
<dbReference type="KEGG" id="dosa:Os01g0503400"/>
<dbReference type="eggNOG" id="KOG1291">
    <property type="taxonomic scope" value="Eukaryota"/>
</dbReference>
<dbReference type="InParanoid" id="Q5QN13"/>
<dbReference type="OMA" id="IIRIAWI"/>
<dbReference type="OrthoDB" id="635454at2759"/>
<dbReference type="Proteomes" id="UP000000763">
    <property type="component" value="Chromosome 1"/>
</dbReference>
<dbReference type="Proteomes" id="UP000007752">
    <property type="component" value="Chromosome 1"/>
</dbReference>
<dbReference type="Proteomes" id="UP000059680">
    <property type="component" value="Chromosome 1"/>
</dbReference>
<dbReference type="ExpressionAtlas" id="Q5QN13">
    <property type="expression patterns" value="baseline and differential"/>
</dbReference>
<dbReference type="GO" id="GO:0005886">
    <property type="term" value="C:plasma membrane"/>
    <property type="evidence" value="ECO:0000318"/>
    <property type="project" value="GO_Central"/>
</dbReference>
<dbReference type="GO" id="GO:0015086">
    <property type="term" value="F:cadmium ion transmembrane transporter activity"/>
    <property type="evidence" value="ECO:0000318"/>
    <property type="project" value="GO_Central"/>
</dbReference>
<dbReference type="GO" id="GO:0005384">
    <property type="term" value="F:manganese ion transmembrane transporter activity"/>
    <property type="evidence" value="ECO:0000318"/>
    <property type="project" value="GO_Central"/>
</dbReference>
<dbReference type="GO" id="GO:0034755">
    <property type="term" value="P:iron ion transmembrane transport"/>
    <property type="evidence" value="ECO:0000318"/>
    <property type="project" value="GO_Central"/>
</dbReference>
<dbReference type="GO" id="GO:0006828">
    <property type="term" value="P:manganese ion transport"/>
    <property type="evidence" value="ECO:0000318"/>
    <property type="project" value="GO_Central"/>
</dbReference>
<dbReference type="HAMAP" id="MF_00221">
    <property type="entry name" value="NRAMP"/>
    <property type="match status" value="1"/>
</dbReference>
<dbReference type="InterPro" id="IPR001046">
    <property type="entry name" value="NRAMP_fam"/>
</dbReference>
<dbReference type="NCBIfam" id="TIGR01197">
    <property type="entry name" value="nramp"/>
    <property type="match status" value="1"/>
</dbReference>
<dbReference type="NCBIfam" id="NF037982">
    <property type="entry name" value="Nramp_1"/>
    <property type="match status" value="1"/>
</dbReference>
<dbReference type="PANTHER" id="PTHR11706:SF47">
    <property type="entry name" value="METAL TRANSPORTER NRAMP4"/>
    <property type="match status" value="1"/>
</dbReference>
<dbReference type="PANTHER" id="PTHR11706">
    <property type="entry name" value="SOLUTE CARRIER PROTEIN FAMILY 11 MEMBER"/>
    <property type="match status" value="1"/>
</dbReference>
<dbReference type="Pfam" id="PF01566">
    <property type="entry name" value="Nramp"/>
    <property type="match status" value="1"/>
</dbReference>
<dbReference type="PRINTS" id="PR00447">
    <property type="entry name" value="NATRESASSCMP"/>
</dbReference>
<keyword id="KW-0025">Alternative splicing</keyword>
<keyword id="KW-0406">Ion transport</keyword>
<keyword id="KW-0408">Iron</keyword>
<keyword id="KW-0410">Iron transport</keyword>
<keyword id="KW-0472">Membrane</keyword>
<keyword id="KW-1185">Reference proteome</keyword>
<keyword id="KW-0812">Transmembrane</keyword>
<keyword id="KW-1133">Transmembrane helix</keyword>
<keyword id="KW-0813">Transport</keyword>
<name>NRAM4_ORYSJ</name>
<gene>
    <name type="primary">NRAMP4</name>
    <name type="ordered locus">Os01g0503400</name>
    <name type="ordered locus">LOC_Os01g31870</name>
    <name type="ORF">OsJ_01931</name>
    <name type="ORF">P0507H06.36-1</name>
    <name type="ORF">P0507H06.36-2</name>
</gene>
<sequence length="550" mass="59057">MEEGAKIGREHEQQQQQHGRVNGSGRVAAVGGGSGGGGDEIEIEVAAAAGASPSRQHGGLHGDVQAPTWKRFLAHVGPGFVISIAYLDPSNLQTDLVAGSSHRYSLLWVLLFGFIFVLTVQSLAANLGIITGRHLAELCMGEYPKYVKYCLWLLAELGVIAATIPGVLGTALAYNMLLHIPFWAGVLACGACTFLILGLQGYGARKMEFTISVLMLVMATCFFMELGKVNPPAGGVIEGLFIPRPKGDYSTSDAVAMFGSLVVPHNLFLHSSLVLTRKMPYTSKGRKDASTFFLLENALALFIALLVNVAIVSISGTICANNLSFADTSTCSSLTLNSTYVLLKNILGKSSSTVYGVALLVSGQSCMVATSYAGQYIMQGFSGMRKCIIYLVAPCFTLLPSLIICSIGGTLRVHRIINIAAIVLSFVLPFALIPLIKFSSSCTNIGPYKNATSIIRIAWILSLVIIGINIYFFCTSFVAWLVHSDLPRVVNAIISSLVFPFMAAYIAALIYLAFRKVNLSDPFPTNSVSGEIEVQHIQIQEKQEDLGVHL</sequence>
<evidence type="ECO:0000250" key="1"/>
<evidence type="ECO:0000255" key="2"/>
<evidence type="ECO:0000256" key="3">
    <source>
        <dbReference type="SAM" id="MobiDB-lite"/>
    </source>
</evidence>
<evidence type="ECO:0000303" key="4">
    <source>
    </source>
</evidence>
<evidence type="ECO:0000305" key="5"/>